<feature type="chain" id="PRO_0000201545" description="Heme exporter protein B">
    <location>
        <begin position="1"/>
        <end position="218"/>
    </location>
</feature>
<feature type="transmembrane region" description="Helical" evidence="2">
    <location>
        <begin position="17"/>
        <end position="37"/>
    </location>
</feature>
<feature type="transmembrane region" description="Helical" evidence="2">
    <location>
        <begin position="50"/>
        <end position="70"/>
    </location>
</feature>
<feature type="transmembrane region" description="Helical" evidence="2">
    <location>
        <begin position="99"/>
        <end position="119"/>
    </location>
</feature>
<feature type="transmembrane region" description="Helical" evidence="2">
    <location>
        <begin position="126"/>
        <end position="146"/>
    </location>
</feature>
<feature type="transmembrane region" description="Helical" evidence="2">
    <location>
        <begin position="155"/>
        <end position="175"/>
    </location>
</feature>
<feature type="transmembrane region" description="Helical" evidence="2">
    <location>
        <begin position="190"/>
        <end position="210"/>
    </location>
</feature>
<feature type="sequence conflict" description="In Ref. 1; CAA96494." evidence="3" ref="1">
    <original>G</original>
    <variation>A</variation>
    <location>
        <position position="41"/>
    </location>
</feature>
<feature type="sequence conflict" description="In Ref. 1; CAA96494." evidence="3" ref="1">
    <original>L</original>
    <variation>V</variation>
    <location>
        <position position="44"/>
    </location>
</feature>
<feature type="sequence conflict" description="In Ref. 1; CAA96494." evidence="3" ref="1">
    <location>
        <position position="49"/>
    </location>
</feature>
<feature type="sequence conflict" description="In Ref. 1; CAA96494." evidence="3" ref="1">
    <original>H</original>
    <variation>D</variation>
    <location>
        <position position="98"/>
    </location>
</feature>
<feature type="sequence conflict" description="In Ref. 1; CAA96494." evidence="3" ref="1">
    <original>A</original>
    <variation>R</variation>
    <location>
        <position position="123"/>
    </location>
</feature>
<feature type="sequence conflict" description="In Ref. 1; CAA96494." evidence="3" ref="1">
    <original>M</original>
    <variation>V</variation>
    <location>
        <position position="140"/>
    </location>
</feature>
<feature type="sequence conflict" description="In Ref. 1; CAA96494." evidence="3" ref="1">
    <original>A</original>
    <variation>S</variation>
    <location>
        <position position="143"/>
    </location>
</feature>
<feature type="sequence conflict" description="In Ref. 1; CAA96494." evidence="3" ref="1">
    <original>L</original>
    <variation>V</variation>
    <location>
        <position position="159"/>
    </location>
</feature>
<feature type="sequence conflict" description="In Ref. 1; CAA96494." evidence="3" ref="1">
    <original>PFA</original>
    <variation>F</variation>
    <location>
        <begin position="206"/>
        <end position="208"/>
    </location>
</feature>
<feature type="sequence conflict" description="In Ref. 1; CAA96494." evidence="3" ref="1">
    <original>LR</original>
    <variation>AS</variation>
    <location>
        <begin position="213"/>
        <end position="214"/>
    </location>
</feature>
<name>CCMB_PARDP</name>
<sequence>MKALLIRDLRLATRAGGGFGLALAFFLIVCTLVPFGVGPEGGTLSRIAPGILWVGALLSCLLSLDRIFALDFEDGSLDLLATAPLPLEGAVAIKALAHWLVTGLPLALSAPVFGLLLHLPGPAYPWLVASLLLGTPALSMLGAFGAAVTVGLRRGGLLLSLLVLPLYVPTLIFGAEAVRRGAAGADPMTALVFLAAITLATLALAPFAAAAALRVNLR</sequence>
<accession>P52219</accession>
<accession>A1B1W9</accession>
<gene>
    <name type="primary">ccmB</name>
    <name type="ordered locus">Pden_1412</name>
</gene>
<protein>
    <recommendedName>
        <fullName>Heme exporter protein B</fullName>
    </recommendedName>
    <alternativeName>
        <fullName>Cytochrome c-type biogenesis protein CcmB</fullName>
    </alternativeName>
</protein>
<comment type="function">
    <text evidence="1">Required for the export of heme to the periplasm for the biogenesis of c-type cytochromes.</text>
</comment>
<comment type="subcellular location">
    <subcellularLocation>
        <location evidence="3">Cell inner membrane</location>
        <topology evidence="3">Multi-pass membrane protein</topology>
    </subcellularLocation>
</comment>
<comment type="similarity">
    <text evidence="3">Belongs to the CcmB/CycW/HelB family.</text>
</comment>
<proteinExistence type="inferred from homology"/>
<evidence type="ECO:0000250" key="1"/>
<evidence type="ECO:0000255" key="2"/>
<evidence type="ECO:0000305" key="3"/>
<dbReference type="EMBL" id="Z71971">
    <property type="protein sequence ID" value="CAA96494.1"/>
    <property type="molecule type" value="Genomic_DNA"/>
</dbReference>
<dbReference type="EMBL" id="CP000489">
    <property type="protein sequence ID" value="ABL69513.1"/>
    <property type="molecule type" value="Genomic_DNA"/>
</dbReference>
<dbReference type="RefSeq" id="WP_011747731.1">
    <property type="nucleotide sequence ID" value="NC_008686.1"/>
</dbReference>
<dbReference type="SMR" id="P52219"/>
<dbReference type="STRING" id="318586.Pden_1412"/>
<dbReference type="EnsemblBacteria" id="ABL69513">
    <property type="protein sequence ID" value="ABL69513"/>
    <property type="gene ID" value="Pden_1412"/>
</dbReference>
<dbReference type="GeneID" id="93449880"/>
<dbReference type="KEGG" id="pde:Pden_1412"/>
<dbReference type="eggNOG" id="COG2386">
    <property type="taxonomic scope" value="Bacteria"/>
</dbReference>
<dbReference type="HOGENOM" id="CLU_079069_1_0_5"/>
<dbReference type="OrthoDB" id="9812915at2"/>
<dbReference type="Proteomes" id="UP000000361">
    <property type="component" value="Chromosome 1"/>
</dbReference>
<dbReference type="GO" id="GO:0005886">
    <property type="term" value="C:plasma membrane"/>
    <property type="evidence" value="ECO:0007669"/>
    <property type="project" value="UniProtKB-SubCell"/>
</dbReference>
<dbReference type="GO" id="GO:0015232">
    <property type="term" value="F:heme transmembrane transporter activity"/>
    <property type="evidence" value="ECO:0007669"/>
    <property type="project" value="InterPro"/>
</dbReference>
<dbReference type="GO" id="GO:1903607">
    <property type="term" value="P:cytochrome c biosynthetic process"/>
    <property type="evidence" value="ECO:0007669"/>
    <property type="project" value="TreeGrafter"/>
</dbReference>
<dbReference type="GO" id="GO:0017004">
    <property type="term" value="P:cytochrome complex assembly"/>
    <property type="evidence" value="ECO:0007669"/>
    <property type="project" value="UniProtKB-KW"/>
</dbReference>
<dbReference type="InterPro" id="IPR003544">
    <property type="entry name" value="Cyt_c_biogenesis_CcmB"/>
</dbReference>
<dbReference type="InterPro" id="IPR026031">
    <property type="entry name" value="Cyt_c_CcmB_bac"/>
</dbReference>
<dbReference type="NCBIfam" id="TIGR01190">
    <property type="entry name" value="ccmB"/>
    <property type="match status" value="1"/>
</dbReference>
<dbReference type="PANTHER" id="PTHR30070:SF1">
    <property type="entry name" value="CYTOCHROME C BIOGENESIS B-RELATED"/>
    <property type="match status" value="1"/>
</dbReference>
<dbReference type="PANTHER" id="PTHR30070">
    <property type="entry name" value="HEME EXPORTER PROTEIN B"/>
    <property type="match status" value="1"/>
</dbReference>
<dbReference type="Pfam" id="PF03379">
    <property type="entry name" value="CcmB"/>
    <property type="match status" value="1"/>
</dbReference>
<dbReference type="PIRSF" id="PIRSF002764">
    <property type="entry name" value="CcmB"/>
    <property type="match status" value="1"/>
</dbReference>
<dbReference type="PRINTS" id="PR01414">
    <property type="entry name" value="CCMBBIOGNSIS"/>
</dbReference>
<organism>
    <name type="scientific">Paracoccus denitrificans (strain Pd 1222)</name>
    <dbReference type="NCBI Taxonomy" id="318586"/>
    <lineage>
        <taxon>Bacteria</taxon>
        <taxon>Pseudomonadati</taxon>
        <taxon>Pseudomonadota</taxon>
        <taxon>Alphaproteobacteria</taxon>
        <taxon>Rhodobacterales</taxon>
        <taxon>Paracoccaceae</taxon>
        <taxon>Paracoccus</taxon>
    </lineage>
</organism>
<reference key="1">
    <citation type="journal article" date="1997" name="Microbiology">
        <title>The Paracoccus denitrificans ccmA, B and C genes: cloning and sequencing, and analysis of the potential of their products to form a haem or apo-c-type cytochrome transporter.</title>
        <authorList>
            <person name="Page D."/>
            <person name="Pearce D.A."/>
            <person name="Norris H.A."/>
            <person name="Ferguson S.J."/>
        </authorList>
    </citation>
    <scope>NUCLEOTIDE SEQUENCE [GENOMIC DNA]</scope>
</reference>
<reference key="2">
    <citation type="submission" date="2006-12" db="EMBL/GenBank/DDBJ databases">
        <title>Complete sequence of chromosome 1 of Paracoccus denitrificans PD1222.</title>
        <authorList>
            <person name="Copeland A."/>
            <person name="Lucas S."/>
            <person name="Lapidus A."/>
            <person name="Barry K."/>
            <person name="Detter J.C."/>
            <person name="Glavina del Rio T."/>
            <person name="Hammon N."/>
            <person name="Israni S."/>
            <person name="Dalin E."/>
            <person name="Tice H."/>
            <person name="Pitluck S."/>
            <person name="Munk A.C."/>
            <person name="Brettin T."/>
            <person name="Bruce D."/>
            <person name="Han C."/>
            <person name="Tapia R."/>
            <person name="Gilna P."/>
            <person name="Schmutz J."/>
            <person name="Larimer F."/>
            <person name="Land M."/>
            <person name="Hauser L."/>
            <person name="Kyrpides N."/>
            <person name="Lykidis A."/>
            <person name="Spiro S."/>
            <person name="Richardson D.J."/>
            <person name="Moir J.W.B."/>
            <person name="Ferguson S.J."/>
            <person name="van Spanning R.J.M."/>
            <person name="Richardson P."/>
        </authorList>
    </citation>
    <scope>NUCLEOTIDE SEQUENCE [LARGE SCALE GENOMIC DNA]</scope>
    <source>
        <strain>Pd 1222</strain>
    </source>
</reference>
<keyword id="KW-0997">Cell inner membrane</keyword>
<keyword id="KW-1003">Cell membrane</keyword>
<keyword id="KW-0201">Cytochrome c-type biogenesis</keyword>
<keyword id="KW-0472">Membrane</keyword>
<keyword id="KW-1185">Reference proteome</keyword>
<keyword id="KW-0812">Transmembrane</keyword>
<keyword id="KW-1133">Transmembrane helix</keyword>
<keyword id="KW-0813">Transport</keyword>